<dbReference type="EMBL" id="AF086838">
    <property type="protein sequence ID" value="AAD11418.1"/>
    <property type="molecule type" value="mRNA"/>
</dbReference>
<dbReference type="EMBL" id="AK007458">
    <property type="protein sequence ID" value="BAB25049.1"/>
    <property type="molecule type" value="mRNA"/>
</dbReference>
<dbReference type="EMBL" id="AK048007">
    <property type="protein sequence ID" value="BAC33212.1"/>
    <property type="molecule type" value="mRNA"/>
</dbReference>
<dbReference type="EMBL" id="AK050151">
    <property type="protein sequence ID" value="BAC34095.1"/>
    <property type="molecule type" value="mRNA"/>
</dbReference>
<dbReference type="EMBL" id="AK077840">
    <property type="protein sequence ID" value="BAC37029.1"/>
    <property type="molecule type" value="mRNA"/>
</dbReference>
<dbReference type="EMBL" id="AK080718">
    <property type="protein sequence ID" value="BAC37991.1"/>
    <property type="molecule type" value="mRNA"/>
</dbReference>
<dbReference type="EMBL" id="AK152057">
    <property type="protein sequence ID" value="BAE30913.1"/>
    <property type="molecule type" value="mRNA"/>
</dbReference>
<dbReference type="EMBL" id="BC006744">
    <property type="protein sequence ID" value="AAH06744.1"/>
    <property type="molecule type" value="mRNA"/>
</dbReference>
<dbReference type="EMBL" id="BC048691">
    <property type="protein sequence ID" value="AAH48691.1"/>
    <property type="molecule type" value="mRNA"/>
</dbReference>
<dbReference type="CCDS" id="CCDS17531.1">
    <molecule id="Q9Z266-1"/>
</dbReference>
<dbReference type="RefSeq" id="NP_598615.1">
    <molecule id="Q9Z266-1"/>
    <property type="nucleotide sequence ID" value="NM_133854.3"/>
</dbReference>
<dbReference type="SMR" id="Q9Z266"/>
<dbReference type="BioGRID" id="203363">
    <property type="interactions" value="23"/>
</dbReference>
<dbReference type="ComplexPortal" id="CPX-1913">
    <property type="entry name" value="BLOC-1 complex"/>
</dbReference>
<dbReference type="ComplexPortal" id="CPX-5061">
    <property type="entry name" value="BORC complex"/>
</dbReference>
<dbReference type="CORUM" id="Q9Z266"/>
<dbReference type="FunCoup" id="Q9Z266">
    <property type="interactions" value="1414"/>
</dbReference>
<dbReference type="IntAct" id="Q9Z266">
    <property type="interactions" value="5"/>
</dbReference>
<dbReference type="MINT" id="Q9Z266"/>
<dbReference type="STRING" id="10090.ENSMUSP00000122090"/>
<dbReference type="iPTMnet" id="Q9Z266"/>
<dbReference type="PhosphoSitePlus" id="Q9Z266"/>
<dbReference type="PaxDb" id="10090-ENSMUSP00000122090"/>
<dbReference type="PeptideAtlas" id="Q9Z266"/>
<dbReference type="ProteomicsDB" id="261384">
    <molecule id="Q9Z266-1"/>
</dbReference>
<dbReference type="ProteomicsDB" id="261385">
    <molecule id="Q9Z266-2"/>
</dbReference>
<dbReference type="Pumba" id="Q9Z266"/>
<dbReference type="ABCD" id="Q9Z266">
    <property type="antibodies" value="1 sequenced antibody"/>
</dbReference>
<dbReference type="Antibodypedia" id="34134">
    <property type="antibodies" value="148 antibodies from 30 providers"/>
</dbReference>
<dbReference type="DNASU" id="20615"/>
<dbReference type="Ensembl" id="ENSMUST00000149884.2">
    <molecule id="Q9Z266-1"/>
    <property type="protein sequence ID" value="ENSMUSP00000122090.2"/>
    <property type="gene ID" value="ENSMUSG00000001018.16"/>
</dbReference>
<dbReference type="GeneID" id="20615"/>
<dbReference type="KEGG" id="mmu:20615"/>
<dbReference type="UCSC" id="uc008qck.2">
    <molecule id="Q9Z266-1"/>
    <property type="organism name" value="mouse"/>
</dbReference>
<dbReference type="AGR" id="MGI:1333745"/>
<dbReference type="CTD" id="23557"/>
<dbReference type="MGI" id="MGI:1333745">
    <property type="gene designation" value="Snapin"/>
</dbReference>
<dbReference type="VEuPathDB" id="HostDB:ENSMUSG00000001018"/>
<dbReference type="eggNOG" id="ENOG502S07W">
    <property type="taxonomic scope" value="Eukaryota"/>
</dbReference>
<dbReference type="GeneTree" id="ENSGT00390000008274"/>
<dbReference type="HOGENOM" id="CLU_124640_1_0_1"/>
<dbReference type="InParanoid" id="Q9Z266"/>
<dbReference type="OMA" id="LNMHIRE"/>
<dbReference type="OrthoDB" id="5399166at2759"/>
<dbReference type="PhylomeDB" id="Q9Z266"/>
<dbReference type="TreeFam" id="TF319577"/>
<dbReference type="Reactome" id="R-MMU-432722">
    <property type="pathway name" value="Golgi Associated Vesicle Biogenesis"/>
</dbReference>
<dbReference type="BioGRID-ORCS" id="20615">
    <property type="hits" value="3 hits in 78 CRISPR screens"/>
</dbReference>
<dbReference type="ChiTaRS" id="Snapin">
    <property type="organism name" value="mouse"/>
</dbReference>
<dbReference type="PRO" id="PR:Q9Z266"/>
<dbReference type="Proteomes" id="UP000000589">
    <property type="component" value="Chromosome 3"/>
</dbReference>
<dbReference type="RNAct" id="Q9Z266">
    <property type="molecule type" value="protein"/>
</dbReference>
<dbReference type="Bgee" id="ENSMUSG00000001018">
    <property type="expression patterns" value="Expressed in floor plate of midbrain and 261 other cell types or tissues"/>
</dbReference>
<dbReference type="ExpressionAtlas" id="Q9Z266">
    <property type="expression patterns" value="baseline and differential"/>
</dbReference>
<dbReference type="GO" id="GO:0001669">
    <property type="term" value="C:acrosomal vesicle"/>
    <property type="evidence" value="ECO:0000314"/>
    <property type="project" value="MGI"/>
</dbReference>
<dbReference type="GO" id="GO:1904115">
    <property type="term" value="C:axon cytoplasm"/>
    <property type="evidence" value="ECO:0007669"/>
    <property type="project" value="GOC"/>
</dbReference>
<dbReference type="GO" id="GO:0031083">
    <property type="term" value="C:BLOC-1 complex"/>
    <property type="evidence" value="ECO:0000314"/>
    <property type="project" value="MGI"/>
</dbReference>
<dbReference type="GO" id="GO:0099078">
    <property type="term" value="C:BORC complex"/>
    <property type="evidence" value="ECO:0000266"/>
    <property type="project" value="ComplexPortal"/>
</dbReference>
<dbReference type="GO" id="GO:0098574">
    <property type="term" value="C:cytoplasmic side of lysosomal membrane"/>
    <property type="evidence" value="ECO:0000303"/>
    <property type="project" value="ComplexPortal"/>
</dbReference>
<dbReference type="GO" id="GO:0031410">
    <property type="term" value="C:cytoplasmic vesicle"/>
    <property type="evidence" value="ECO:0000314"/>
    <property type="project" value="MGI"/>
</dbReference>
<dbReference type="GO" id="GO:0005829">
    <property type="term" value="C:cytosol"/>
    <property type="evidence" value="ECO:0000314"/>
    <property type="project" value="MGI"/>
</dbReference>
<dbReference type="GO" id="GO:0000139">
    <property type="term" value="C:Golgi membrane"/>
    <property type="evidence" value="ECO:0007669"/>
    <property type="project" value="UniProtKB-SubCell"/>
</dbReference>
<dbReference type="GO" id="GO:0002177">
    <property type="term" value="C:manchette"/>
    <property type="evidence" value="ECO:0000314"/>
    <property type="project" value="MGI"/>
</dbReference>
<dbReference type="GO" id="GO:1990742">
    <property type="term" value="C:microvesicle"/>
    <property type="evidence" value="ECO:0000314"/>
    <property type="project" value="MGI"/>
</dbReference>
<dbReference type="GO" id="GO:0048471">
    <property type="term" value="C:perinuclear region of cytoplasm"/>
    <property type="evidence" value="ECO:0000250"/>
    <property type="project" value="UniProtKB"/>
</dbReference>
<dbReference type="GO" id="GO:0030141">
    <property type="term" value="C:secretory granule"/>
    <property type="evidence" value="ECO:0000250"/>
    <property type="project" value="UniProtKB"/>
</dbReference>
<dbReference type="GO" id="GO:0045202">
    <property type="term" value="C:synapse"/>
    <property type="evidence" value="ECO:0000266"/>
    <property type="project" value="MGI"/>
</dbReference>
<dbReference type="GO" id="GO:0030672">
    <property type="term" value="C:synaptic vesicle membrane"/>
    <property type="evidence" value="ECO:0007669"/>
    <property type="project" value="UniProtKB-SubCell"/>
</dbReference>
<dbReference type="GO" id="GO:0000149">
    <property type="term" value="F:SNARE binding"/>
    <property type="evidence" value="ECO:0000266"/>
    <property type="project" value="MGI"/>
</dbReference>
<dbReference type="GO" id="GO:0008089">
    <property type="term" value="P:anterograde axonal transport"/>
    <property type="evidence" value="ECO:0000315"/>
    <property type="project" value="UniProtKB"/>
</dbReference>
<dbReference type="GO" id="GO:0048490">
    <property type="term" value="P:anterograde synaptic vesicle transport"/>
    <property type="evidence" value="ECO:0000315"/>
    <property type="project" value="UniProtKB"/>
</dbReference>
<dbReference type="GO" id="GO:0097352">
    <property type="term" value="P:autophagosome maturation"/>
    <property type="evidence" value="ECO:0000315"/>
    <property type="project" value="MGI"/>
</dbReference>
<dbReference type="GO" id="GO:0017156">
    <property type="term" value="P:calcium-ion regulated exocytosis"/>
    <property type="evidence" value="ECO:0000304"/>
    <property type="project" value="ParkinsonsUK-UCL"/>
</dbReference>
<dbReference type="GO" id="GO:0007268">
    <property type="term" value="P:chemical synaptic transmission"/>
    <property type="evidence" value="ECO:0000315"/>
    <property type="project" value="MGI"/>
</dbReference>
<dbReference type="GO" id="GO:0008333">
    <property type="term" value="P:endosome to lysosome transport"/>
    <property type="evidence" value="ECO:0000266"/>
    <property type="project" value="MGI"/>
</dbReference>
<dbReference type="GO" id="GO:0051650">
    <property type="term" value="P:establishment of vesicle localization"/>
    <property type="evidence" value="ECO:0000315"/>
    <property type="project" value="MGI"/>
</dbReference>
<dbReference type="GO" id="GO:0006886">
    <property type="term" value="P:intracellular protein transport"/>
    <property type="evidence" value="ECO:0007669"/>
    <property type="project" value="InterPro"/>
</dbReference>
<dbReference type="GO" id="GO:1902774">
    <property type="term" value="P:late endosome to lysosome transport"/>
    <property type="evidence" value="ECO:0000315"/>
    <property type="project" value="MGI"/>
</dbReference>
<dbReference type="GO" id="GO:0007042">
    <property type="term" value="P:lysosomal lumen acidification"/>
    <property type="evidence" value="ECO:0000315"/>
    <property type="project" value="MGI"/>
</dbReference>
<dbReference type="GO" id="GO:0032418">
    <property type="term" value="P:lysosome localization"/>
    <property type="evidence" value="ECO:0000250"/>
    <property type="project" value="UniProtKB"/>
</dbReference>
<dbReference type="GO" id="GO:0007040">
    <property type="term" value="P:lysosome organization"/>
    <property type="evidence" value="ECO:0000315"/>
    <property type="project" value="MGI"/>
</dbReference>
<dbReference type="GO" id="GO:0032438">
    <property type="term" value="P:melanosome organization"/>
    <property type="evidence" value="ECO:0000303"/>
    <property type="project" value="ComplexPortal"/>
</dbReference>
<dbReference type="GO" id="GO:0010977">
    <property type="term" value="P:negative regulation of neuron projection development"/>
    <property type="evidence" value="ECO:0000316"/>
    <property type="project" value="ParkinsonsUK-UCL"/>
</dbReference>
<dbReference type="GO" id="GO:0070050">
    <property type="term" value="P:neuron cellular homeostasis"/>
    <property type="evidence" value="ECO:0000315"/>
    <property type="project" value="MGI"/>
</dbReference>
<dbReference type="GO" id="GO:0031175">
    <property type="term" value="P:neuron projection development"/>
    <property type="evidence" value="ECO:0000303"/>
    <property type="project" value="UniProtKB"/>
</dbReference>
<dbReference type="GO" id="GO:0072384">
    <property type="term" value="P:organelle transport along microtubule"/>
    <property type="evidence" value="ECO:0000303"/>
    <property type="project" value="ComplexPortal"/>
</dbReference>
<dbReference type="GO" id="GO:0051604">
    <property type="term" value="P:protein maturation"/>
    <property type="evidence" value="ECO:0000315"/>
    <property type="project" value="MGI"/>
</dbReference>
<dbReference type="GO" id="GO:0031503">
    <property type="term" value="P:protein-containing complex localization"/>
    <property type="evidence" value="ECO:0000315"/>
    <property type="project" value="MGI"/>
</dbReference>
<dbReference type="GO" id="GO:0051036">
    <property type="term" value="P:regulation of endosome size"/>
    <property type="evidence" value="ECO:0000303"/>
    <property type="project" value="ComplexPortal"/>
</dbReference>
<dbReference type="GO" id="GO:0062196">
    <property type="term" value="P:regulation of lysosome size"/>
    <property type="evidence" value="ECO:0000303"/>
    <property type="project" value="ComplexPortal"/>
</dbReference>
<dbReference type="GO" id="GO:2000300">
    <property type="term" value="P:regulation of synaptic vesicle exocytosis"/>
    <property type="evidence" value="ECO:0000314"/>
    <property type="project" value="SynGO"/>
</dbReference>
<dbReference type="GO" id="GO:0008090">
    <property type="term" value="P:retrograde axonal transport"/>
    <property type="evidence" value="ECO:0000315"/>
    <property type="project" value="MGI"/>
</dbReference>
<dbReference type="GO" id="GO:0016079">
    <property type="term" value="P:synaptic vesicle exocytosis"/>
    <property type="evidence" value="ECO:0000266"/>
    <property type="project" value="MGI"/>
</dbReference>
<dbReference type="GO" id="GO:0031629">
    <property type="term" value="P:synaptic vesicle fusion to presynaptic active zone membrane"/>
    <property type="evidence" value="ECO:0000315"/>
    <property type="project" value="MGI"/>
</dbReference>
<dbReference type="GO" id="GO:0016188">
    <property type="term" value="P:synaptic vesicle maturation"/>
    <property type="evidence" value="ECO:0000315"/>
    <property type="project" value="MGI"/>
</dbReference>
<dbReference type="GO" id="GO:0048489">
    <property type="term" value="P:synaptic vesicle transport"/>
    <property type="evidence" value="ECO:0000250"/>
    <property type="project" value="UniProtKB"/>
</dbReference>
<dbReference type="GO" id="GO:0072553">
    <property type="term" value="P:terminal button organization"/>
    <property type="evidence" value="ECO:0000315"/>
    <property type="project" value="MGI"/>
</dbReference>
<dbReference type="InterPro" id="IPR017246">
    <property type="entry name" value="Snapin"/>
</dbReference>
<dbReference type="InterPro" id="IPR028119">
    <property type="entry name" value="Snapin/Pallidin/Snn1"/>
</dbReference>
<dbReference type="PANTHER" id="PTHR31305">
    <property type="entry name" value="SNARE-ASSOCIATED PROTEIN SNAPIN"/>
    <property type="match status" value="1"/>
</dbReference>
<dbReference type="PANTHER" id="PTHR31305:SF2">
    <property type="entry name" value="SNARE-ASSOCIATED PROTEIN SNAPIN"/>
    <property type="match status" value="1"/>
</dbReference>
<dbReference type="Pfam" id="PF14712">
    <property type="entry name" value="Snapin_Pallidin"/>
    <property type="match status" value="1"/>
</dbReference>
<dbReference type="PIRSF" id="PIRSF037631">
    <property type="entry name" value="Snapin"/>
    <property type="match status" value="1"/>
</dbReference>
<gene>
    <name type="primary">Snapin</name>
    <name type="synonym">Bloc1s7</name>
    <name type="synonym">Snap25bp</name>
    <name type="synonym">Snapap</name>
</gene>
<organism>
    <name type="scientific">Mus musculus</name>
    <name type="common">Mouse</name>
    <dbReference type="NCBI Taxonomy" id="10090"/>
    <lineage>
        <taxon>Eukaryota</taxon>
        <taxon>Metazoa</taxon>
        <taxon>Chordata</taxon>
        <taxon>Craniata</taxon>
        <taxon>Vertebrata</taxon>
        <taxon>Euteleostomi</taxon>
        <taxon>Mammalia</taxon>
        <taxon>Eutheria</taxon>
        <taxon>Euarchontoglires</taxon>
        <taxon>Glires</taxon>
        <taxon>Rodentia</taxon>
        <taxon>Myomorpha</taxon>
        <taxon>Muroidea</taxon>
        <taxon>Muridae</taxon>
        <taxon>Murinae</taxon>
        <taxon>Mus</taxon>
        <taxon>Mus</taxon>
    </lineage>
</organism>
<reference key="1">
    <citation type="journal article" date="1999" name="Nat. Neurosci.">
        <title>Snapin: a SNARE-associated protein implicated in synaptic transmission.</title>
        <authorList>
            <person name="Ilardi J.M."/>
            <person name="Mochida S."/>
            <person name="Sheng Z.-H."/>
        </authorList>
    </citation>
    <scope>NUCLEOTIDE SEQUENCE [MRNA] (ISOFORM 1)</scope>
    <scope>INTERACTION WITH SNAP25</scope>
    <source>
        <tissue>Brain</tissue>
    </source>
</reference>
<reference key="2">
    <citation type="journal article" date="2005" name="Science">
        <title>The transcriptional landscape of the mammalian genome.</title>
        <authorList>
            <person name="Carninci P."/>
            <person name="Kasukawa T."/>
            <person name="Katayama S."/>
            <person name="Gough J."/>
            <person name="Frith M.C."/>
            <person name="Maeda N."/>
            <person name="Oyama R."/>
            <person name="Ravasi T."/>
            <person name="Lenhard B."/>
            <person name="Wells C."/>
            <person name="Kodzius R."/>
            <person name="Shimokawa K."/>
            <person name="Bajic V.B."/>
            <person name="Brenner S.E."/>
            <person name="Batalov S."/>
            <person name="Forrest A.R."/>
            <person name="Zavolan M."/>
            <person name="Davis M.J."/>
            <person name="Wilming L.G."/>
            <person name="Aidinis V."/>
            <person name="Allen J.E."/>
            <person name="Ambesi-Impiombato A."/>
            <person name="Apweiler R."/>
            <person name="Aturaliya R.N."/>
            <person name="Bailey T.L."/>
            <person name="Bansal M."/>
            <person name="Baxter L."/>
            <person name="Beisel K.W."/>
            <person name="Bersano T."/>
            <person name="Bono H."/>
            <person name="Chalk A.M."/>
            <person name="Chiu K.P."/>
            <person name="Choudhary V."/>
            <person name="Christoffels A."/>
            <person name="Clutterbuck D.R."/>
            <person name="Crowe M.L."/>
            <person name="Dalla E."/>
            <person name="Dalrymple B.P."/>
            <person name="de Bono B."/>
            <person name="Della Gatta G."/>
            <person name="di Bernardo D."/>
            <person name="Down T."/>
            <person name="Engstrom P."/>
            <person name="Fagiolini M."/>
            <person name="Faulkner G."/>
            <person name="Fletcher C.F."/>
            <person name="Fukushima T."/>
            <person name="Furuno M."/>
            <person name="Futaki S."/>
            <person name="Gariboldi M."/>
            <person name="Georgii-Hemming P."/>
            <person name="Gingeras T.R."/>
            <person name="Gojobori T."/>
            <person name="Green R.E."/>
            <person name="Gustincich S."/>
            <person name="Harbers M."/>
            <person name="Hayashi Y."/>
            <person name="Hensch T.K."/>
            <person name="Hirokawa N."/>
            <person name="Hill D."/>
            <person name="Huminiecki L."/>
            <person name="Iacono M."/>
            <person name="Ikeo K."/>
            <person name="Iwama A."/>
            <person name="Ishikawa T."/>
            <person name="Jakt M."/>
            <person name="Kanapin A."/>
            <person name="Katoh M."/>
            <person name="Kawasawa Y."/>
            <person name="Kelso J."/>
            <person name="Kitamura H."/>
            <person name="Kitano H."/>
            <person name="Kollias G."/>
            <person name="Krishnan S.P."/>
            <person name="Kruger A."/>
            <person name="Kummerfeld S.K."/>
            <person name="Kurochkin I.V."/>
            <person name="Lareau L.F."/>
            <person name="Lazarevic D."/>
            <person name="Lipovich L."/>
            <person name="Liu J."/>
            <person name="Liuni S."/>
            <person name="McWilliam S."/>
            <person name="Madan Babu M."/>
            <person name="Madera M."/>
            <person name="Marchionni L."/>
            <person name="Matsuda H."/>
            <person name="Matsuzawa S."/>
            <person name="Miki H."/>
            <person name="Mignone F."/>
            <person name="Miyake S."/>
            <person name="Morris K."/>
            <person name="Mottagui-Tabar S."/>
            <person name="Mulder N."/>
            <person name="Nakano N."/>
            <person name="Nakauchi H."/>
            <person name="Ng P."/>
            <person name="Nilsson R."/>
            <person name="Nishiguchi S."/>
            <person name="Nishikawa S."/>
            <person name="Nori F."/>
            <person name="Ohara O."/>
            <person name="Okazaki Y."/>
            <person name="Orlando V."/>
            <person name="Pang K.C."/>
            <person name="Pavan W.J."/>
            <person name="Pavesi G."/>
            <person name="Pesole G."/>
            <person name="Petrovsky N."/>
            <person name="Piazza S."/>
            <person name="Reed J."/>
            <person name="Reid J.F."/>
            <person name="Ring B.Z."/>
            <person name="Ringwald M."/>
            <person name="Rost B."/>
            <person name="Ruan Y."/>
            <person name="Salzberg S.L."/>
            <person name="Sandelin A."/>
            <person name="Schneider C."/>
            <person name="Schoenbach C."/>
            <person name="Sekiguchi K."/>
            <person name="Semple C.A."/>
            <person name="Seno S."/>
            <person name="Sessa L."/>
            <person name="Sheng Y."/>
            <person name="Shibata Y."/>
            <person name="Shimada H."/>
            <person name="Shimada K."/>
            <person name="Silva D."/>
            <person name="Sinclair B."/>
            <person name="Sperling S."/>
            <person name="Stupka E."/>
            <person name="Sugiura K."/>
            <person name="Sultana R."/>
            <person name="Takenaka Y."/>
            <person name="Taki K."/>
            <person name="Tammoja K."/>
            <person name="Tan S.L."/>
            <person name="Tang S."/>
            <person name="Taylor M.S."/>
            <person name="Tegner J."/>
            <person name="Teichmann S.A."/>
            <person name="Ueda H.R."/>
            <person name="van Nimwegen E."/>
            <person name="Verardo R."/>
            <person name="Wei C.L."/>
            <person name="Yagi K."/>
            <person name="Yamanishi H."/>
            <person name="Zabarovsky E."/>
            <person name="Zhu S."/>
            <person name="Zimmer A."/>
            <person name="Hide W."/>
            <person name="Bult C."/>
            <person name="Grimmond S.M."/>
            <person name="Teasdale R.D."/>
            <person name="Liu E.T."/>
            <person name="Brusic V."/>
            <person name="Quackenbush J."/>
            <person name="Wahlestedt C."/>
            <person name="Mattick J.S."/>
            <person name="Hume D.A."/>
            <person name="Kai C."/>
            <person name="Sasaki D."/>
            <person name="Tomaru Y."/>
            <person name="Fukuda S."/>
            <person name="Kanamori-Katayama M."/>
            <person name="Suzuki M."/>
            <person name="Aoki J."/>
            <person name="Arakawa T."/>
            <person name="Iida J."/>
            <person name="Imamura K."/>
            <person name="Itoh M."/>
            <person name="Kato T."/>
            <person name="Kawaji H."/>
            <person name="Kawagashira N."/>
            <person name="Kawashima T."/>
            <person name="Kojima M."/>
            <person name="Kondo S."/>
            <person name="Konno H."/>
            <person name="Nakano K."/>
            <person name="Ninomiya N."/>
            <person name="Nishio T."/>
            <person name="Okada M."/>
            <person name="Plessy C."/>
            <person name="Shibata K."/>
            <person name="Shiraki T."/>
            <person name="Suzuki S."/>
            <person name="Tagami M."/>
            <person name="Waki K."/>
            <person name="Watahiki A."/>
            <person name="Okamura-Oho Y."/>
            <person name="Suzuki H."/>
            <person name="Kawai J."/>
            <person name="Hayashizaki Y."/>
        </authorList>
    </citation>
    <scope>NUCLEOTIDE SEQUENCE [LARGE SCALE MRNA] (ISOFORM 1)</scope>
    <source>
        <strain>C57BL/6J</strain>
        <tissue>Bone marrow</tissue>
        <tissue>Forelimb</tissue>
        <tissue>Head</tissue>
        <tissue>Liver</tissue>
        <tissue>Pancreas</tissue>
        <tissue>Retina</tissue>
    </source>
</reference>
<reference key="3">
    <citation type="journal article" date="2004" name="Genome Res.">
        <title>The status, quality, and expansion of the NIH full-length cDNA project: the Mammalian Gene Collection (MGC).</title>
        <authorList>
            <consortium name="The MGC Project Team"/>
        </authorList>
    </citation>
    <scope>NUCLEOTIDE SEQUENCE [LARGE SCALE MRNA] (ISOFORMS 1 AND 2)</scope>
    <source>
        <tissue>Limb</tissue>
        <tissue>Mammary tumor</tissue>
    </source>
</reference>
<reference key="4">
    <citation type="journal article" date="2003" name="Biochem. J.">
        <title>Identification and characterization of Snapin as a ubiquitously expressed SNARE-binding protein that interacts with SNAP23 in non-neuronal cells.</title>
        <authorList>
            <person name="Buxton P."/>
            <person name="Zhang X.-M."/>
            <person name="Walsh B."/>
            <person name="Sriratana A."/>
            <person name="Schenberg I."/>
            <person name="Manickam E."/>
            <person name="Rowe T."/>
        </authorList>
    </citation>
    <scope>TISSUE SPECIFICITY</scope>
    <scope>SUBCELLULAR LOCATION</scope>
    <scope>TOPOLOGY</scope>
    <scope>INTERACTION WITH SNAP23 AND STX4A</scope>
</reference>
<reference key="5">
    <citation type="journal article" date="2001" name="Nat. Cell Biol.">
        <title>Phosphorylation of Snapin by PKA modulates its interaction with the SNARE complex.</title>
        <authorList>
            <person name="Chheda M.G."/>
            <person name="Ashery U."/>
            <person name="Thakur P."/>
            <person name="Rettig J."/>
            <person name="Sheng Z.-H."/>
        </authorList>
    </citation>
    <scope>PHOSPHORYLATION AT SER-50</scope>
    <scope>INTERACTION WITH SNAP25</scope>
    <scope>SUBCELLULAR LOCATION</scope>
    <scope>MUTAGENESIS OF SER-42; SER-50 AND THR-63</scope>
</reference>
<reference key="6">
    <citation type="journal article" date="2003" name="Biochem. Soc. Trans.">
        <title>Regulation of the exocytotic machinery by cAMP-dependent protein kinase: implications for presynaptic plasticity.</title>
        <authorList>
            <person name="Evans G.J."/>
            <person name="Morgan A."/>
        </authorList>
    </citation>
    <scope>REVIEW ON PHOSPHORYLATION</scope>
</reference>
<reference key="7">
    <citation type="journal article" date="2006" name="FEBS Lett.">
        <title>Casein kinase 1 delta (CK1delta) interacts with the SNARE associated protein snapin.</title>
        <authorList>
            <person name="Wolff S."/>
            <person name="Stoeter M."/>
            <person name="Giamas G."/>
            <person name="Piesche M."/>
            <person name="Henne-Bruns D."/>
            <person name="Banting G."/>
            <person name="Knippschild U."/>
        </authorList>
    </citation>
    <scope>PHOSPHORYLATION BY CSNK1D/CK1</scope>
    <scope>SUBCELLULAR LOCATION</scope>
    <scope>INTERACTION WITH CSNK1D</scope>
</reference>
<reference key="8">
    <citation type="journal article" date="2006" name="Mol. Biol. Cell">
        <title>BLOC-1 complex deficiency alters the targeting of adaptor protein complex-3 cargoes.</title>
        <authorList>
            <person name="Salazar G."/>
            <person name="Craige B."/>
            <person name="Styers M.L."/>
            <person name="Newell-Litwa K.A."/>
            <person name="Doucette M.M."/>
            <person name="Wainer B.H."/>
            <person name="Falcon-Perez J.M."/>
            <person name="Dell'Angelica E.C."/>
            <person name="Peden A.A."/>
            <person name="Werner E."/>
            <person name="Faundez V."/>
        </authorList>
    </citation>
    <scope>FUNCTION</scope>
</reference>
<reference key="9">
    <citation type="journal article" date="2009" name="Mol. Hum. Reprod.">
        <title>The SNARE-associated component SNAPIN binds PUMILIO2 and NANOS1 proteins in human male germ cells.</title>
        <authorList>
            <person name="Ginter-Matuszewska B."/>
            <person name="Spik A."/>
            <person name="Rembiszewska A."/>
            <person name="Koyias C."/>
            <person name="Kupryjanczyk J."/>
            <person name="Jaruzelska J."/>
        </authorList>
    </citation>
    <scope>TISSUE SPECIFICITY</scope>
</reference>
<reference key="10">
    <citation type="journal article" date="2010" name="Cell">
        <title>A tissue-specific atlas of mouse protein phosphorylation and expression.</title>
        <authorList>
            <person name="Huttlin E.L."/>
            <person name="Jedrychowski M.P."/>
            <person name="Elias J.E."/>
            <person name="Goswami T."/>
            <person name="Rad R."/>
            <person name="Beausoleil S.A."/>
            <person name="Villen J."/>
            <person name="Haas W."/>
            <person name="Sowa M.E."/>
            <person name="Gygi S.P."/>
        </authorList>
    </citation>
    <scope>PHOSPHORYLATION [LARGE SCALE ANALYSIS] AT SER-133</scope>
    <scope>IDENTIFICATION BY MASS SPECTROMETRY [LARGE SCALE ANALYSIS]</scope>
    <source>
        <tissue>Brain</tissue>
        <tissue>Brown adipose tissue</tissue>
        <tissue>Kidney</tissue>
        <tissue>Liver</tissue>
        <tissue>Lung</tissue>
        <tissue>Pancreas</tissue>
        <tissue>Testis</tissue>
    </source>
</reference>
<reference key="11">
    <citation type="journal article" date="2010" name="Mol. Psychiatry">
        <title>The dysbindin-containing complex (BLOC-1) in brain: developmental regulation, interaction with SNARE proteins and role in neurite outgrowth.</title>
        <authorList>
            <person name="Ghiani C.A."/>
            <person name="Starcevic M."/>
            <person name="Rodriguez-Fernandez I.A."/>
            <person name="Nazarian R."/>
            <person name="Cheli V.T."/>
            <person name="Chan L.N."/>
            <person name="Malvar J.S."/>
            <person name="de Vellis J."/>
            <person name="Sabatti C."/>
            <person name="Dell'Angelica E.C."/>
        </authorList>
    </citation>
    <scope>FUNCTION</scope>
</reference>
<reference key="12">
    <citation type="journal article" date="2011" name="Mol. Biol. Cell">
        <title>The schizophrenia susceptibility factor dysbindin and its associated complex sort cargoes from cell bodies to the synapse.</title>
        <authorList>
            <person name="Larimore J."/>
            <person name="Tornieri K."/>
            <person name="Ryder P.V."/>
            <person name="Gokhale A."/>
            <person name="Zlatic S.A."/>
            <person name="Craige B."/>
            <person name="Lee J.D."/>
            <person name="Talbot K."/>
            <person name="Pare J.F."/>
            <person name="Smith Y."/>
            <person name="Faundez V."/>
        </authorList>
    </citation>
    <scope>FUNCTION</scope>
    <scope>ASSOCIATION WITH THE AP-3 COMPLEX</scope>
</reference>
<evidence type="ECO:0000250" key="1"/>
<evidence type="ECO:0000250" key="2">
    <source>
        <dbReference type="UniProtKB" id="O95295"/>
    </source>
</evidence>
<evidence type="ECO:0000255" key="3"/>
<evidence type="ECO:0000269" key="4">
    <source>
    </source>
</evidence>
<evidence type="ECO:0000269" key="5">
    <source>
    </source>
</evidence>
<evidence type="ECO:0000269" key="6">
    <source>
    </source>
</evidence>
<evidence type="ECO:0000269" key="7">
    <source>
    </source>
</evidence>
<evidence type="ECO:0000269" key="8">
    <source>
    </source>
</evidence>
<evidence type="ECO:0000269" key="9">
    <source>
    </source>
</evidence>
<evidence type="ECO:0000269" key="10">
    <source>
    </source>
</evidence>
<evidence type="ECO:0000269" key="11">
    <source>
    </source>
</evidence>
<evidence type="ECO:0000303" key="12">
    <source>
    </source>
</evidence>
<evidence type="ECO:0000305" key="13"/>
<evidence type="ECO:0007744" key="14">
    <source>
    </source>
</evidence>
<name>SNAPN_MOUSE</name>
<comment type="function">
    <text evidence="2 7 10 11">Component of the BLOC-1 complex, a complex that is required for normal biogenesis of lysosome-related organelles (LRO), such as platelet dense granules and melanosomes. In concert with the AP-3 complex, the BLOC-1 complex is required to target membrane protein cargos into vesicles assembled at cell bodies for delivery into neurites and nerve terminals. The BLOC-1 complex, in association with SNARE proteins, is also proposed to be involved in neurite extension. Plays a role in intracellular vesicle trafficking and synaptic vesicle recycling. May modulate a step between vesicle priming, fusion and calcium-dependent neurotransmitter release through its ability to potentiate the interaction of synaptotagmin with the SNAREs and the plasma-membrane-associated protein SNAP25. Its phosphorylation state influences exocytotic protein interactions and may regulate synaptic vesicle exocytosis. May also have a role in the mechanisms of SNARE-mediated membrane fusion in non-neuronal cells (PubMed:16760431, PubMed:19546860, PubMed:21998198). As part of the BORC complex may play a role in lysosomes movement and localization at the cell periphery. Associated with the cytosolic face of lysosomes, the BORC complex may recruit ARL8B and couple lysosomes to microtubule plus-end-directed kinesin motor (By similarity).</text>
</comment>
<comment type="subunit">
    <text evidence="2 4 5 6 8 11">Component of the biogenesis of lysosome-related organelles complex 1 (BLOC-1) composed of BLOC1S1, BLOC1S2, BLOC1S3, BLOC1S4, BLOC1S5, BLOC1S6, DTNBP1/BLOC1S7 and SNAPIN/BLOC1S8. Octamer composed of one copy each BLOC1S1, BLOC1S2, BLOC1S3, BLOC1S4, BLOC1S5, BLOC1S6, DTNBP1/BLOC1S7 and SNAPIN/BLOC1S8. The BLOC-1 complex associates with the AP-3 protein complex and membrane protein cargos (PubMed:21998198). Component of the BLOC-one-related complex (BORC) which is composed of BLOC1S1, BLOC1S2, BORCS5, BORCS6, BORCS7, BORCS8, KXD1 and SNAPIN (By similarity). Associates with the SNARE complex. Interacts with CSNK1D, SNAP23 and STX4A but not with STX1A, VAMP2 and SYT1 (PubMed:12877659, PubMed:17101137). Interacts with SNAP25; the interaction with SNAP25 is increased by its phosphorylation (PubMed:10195194, PubMed:11283605). Interacts with CNTRL, NANOS1, PUM2 and RGS7. Interacts with TOR1A; the interaction is direct and associates SNAPIN with the CSN complex (By similarity).</text>
</comment>
<comment type="interaction">
    <interactant intactId="EBI-6170320">
        <id>Q9Z266</id>
    </interactant>
    <interactant intactId="EBI-7088890">
        <id>Q06486-2</id>
        <label>Csnk1d</label>
    </interactant>
    <organismsDiffer>true</organismsDiffer>
    <experiments>4</experiments>
</comment>
<comment type="subcellular location">
    <subcellularLocation>
        <location evidence="6">Membrane</location>
        <topology evidence="6">Peripheral membrane protein</topology>
        <orientation evidence="6">Cytoplasmic side</orientation>
    </subcellularLocation>
    <subcellularLocation>
        <location evidence="6">Cytoplasm</location>
        <location evidence="6">Cytosol</location>
    </subcellularLocation>
    <subcellularLocation>
        <location evidence="6">Cytoplasm</location>
        <location evidence="6">Perinuclear region</location>
    </subcellularLocation>
    <subcellularLocation>
        <location evidence="8">Golgi apparatus membrane</location>
    </subcellularLocation>
    <subcellularLocation>
        <location evidence="2">Lysosome membrane</location>
    </subcellularLocation>
    <subcellularLocation>
        <location evidence="5">Cytoplasmic vesicle</location>
        <location evidence="5">Secretory vesicle</location>
        <location evidence="5">Synaptic vesicle membrane</location>
    </subcellularLocation>
    <text evidence="2">Colocalizes with NANOS1 and PUM2 in the perinuclear region of germ cells.</text>
</comment>
<comment type="alternative products">
    <event type="alternative splicing"/>
    <isoform>
        <id>Q9Z266-1</id>
        <name>1</name>
        <sequence type="displayed"/>
    </isoform>
    <isoform>
        <id>Q9Z266-2</id>
        <name>2</name>
        <sequence type="described" ref="VSP_009165 VSP_009166"/>
    </isoform>
</comment>
<comment type="tissue specificity">
    <text evidence="6 9">Strongly expressed in heart, brain, testis, kidney and liver; low expression in spleen, lung and skeletal muscle. In the testis, expressed in the seminiferous tubules.</text>
</comment>
<comment type="PTM">
    <text evidence="1 5 8">Phosphorylated by PKD, phosphorylation controls SNAPIN protein stability (By similarity). Phosphorylated by CSNK1D/CK1.</text>
</comment>
<comment type="similarity">
    <text evidence="13">Belongs to the SNAPIN family.</text>
</comment>
<keyword id="KW-0007">Acetylation</keyword>
<keyword id="KW-0025">Alternative splicing</keyword>
<keyword id="KW-0175">Coiled coil</keyword>
<keyword id="KW-0963">Cytoplasm</keyword>
<keyword id="KW-0968">Cytoplasmic vesicle</keyword>
<keyword id="KW-0268">Exocytosis</keyword>
<keyword id="KW-0333">Golgi apparatus</keyword>
<keyword id="KW-0458">Lysosome</keyword>
<keyword id="KW-0472">Membrane</keyword>
<keyword id="KW-0597">Phosphoprotein</keyword>
<keyword id="KW-1185">Reference proteome</keyword>
<keyword id="KW-0770">Synapse</keyword>
<accession>Q9Z266</accession>
<accession>Q3U8V4</accession>
<accession>Q922V7</accession>
<protein>
    <recommendedName>
        <fullName>SNARE-associated protein Snapin</fullName>
    </recommendedName>
    <alternativeName>
        <fullName>Biogenesis of lysosome-related organelles complex 1 subunit 7</fullName>
        <shortName>BLOC-1 subunit 7</shortName>
    </alternativeName>
    <alternativeName>
        <fullName>Synaptosomal-associated protein 25-binding protein</fullName>
        <shortName>SNAP-associated protein</shortName>
    </alternativeName>
</protein>
<feature type="initiator methionine" description="Removed" evidence="2">
    <location>
        <position position="1"/>
    </location>
</feature>
<feature type="chain" id="PRO_0000097557" description="SNARE-associated protein Snapin">
    <location>
        <begin position="2"/>
        <end position="136"/>
    </location>
</feature>
<feature type="region of interest" description="Interaction with TOR1A" evidence="1">
    <location>
        <begin position="83"/>
        <end position="136"/>
    </location>
</feature>
<feature type="coiled-coil region" evidence="3">
    <location>
        <begin position="37"/>
        <end position="126"/>
    </location>
</feature>
<feature type="modified residue" description="N-acetylalanine" evidence="2">
    <location>
        <position position="2"/>
    </location>
</feature>
<feature type="modified residue" description="Phosphoserine" evidence="2">
    <location>
        <position position="10"/>
    </location>
</feature>
<feature type="modified residue" description="Phosphothreonine" evidence="2">
    <location>
        <position position="14"/>
    </location>
</feature>
<feature type="modified residue" description="Phosphoserine; by PKA; in vitro" evidence="5">
    <location>
        <position position="50"/>
    </location>
</feature>
<feature type="modified residue" description="Phosphoserine" evidence="2">
    <location>
        <position position="126"/>
    </location>
</feature>
<feature type="modified residue" description="Phosphotyrosine" evidence="2">
    <location>
        <position position="129"/>
    </location>
</feature>
<feature type="modified residue" description="Phosphoserine" evidence="14">
    <location>
        <position position="133"/>
    </location>
</feature>
<feature type="splice variant" id="VSP_009165" description="In isoform 2." evidence="12">
    <location>
        <begin position="1"/>
        <end position="54"/>
    </location>
</feature>
<feature type="splice variant" id="VSP_009166" description="In isoform 2." evidence="12">
    <original>REQIDNLAT</original>
    <variation>MLVAHFLFP</variation>
    <location>
        <begin position="55"/>
        <end position="63"/>
    </location>
</feature>
<feature type="mutagenesis site" description="No effect." evidence="5">
    <original>S</original>
    <variation>A</variation>
    <location>
        <position position="42"/>
    </location>
</feature>
<feature type="mutagenesis site" description="Inhibition of phosphorylation." evidence="5">
    <original>S</original>
    <variation>A</variation>
    <location>
        <position position="50"/>
    </location>
</feature>
<feature type="mutagenesis site" description="3.5-fold increase in SNAP25 binding." evidence="5">
    <original>S</original>
    <variation>D</variation>
    <location>
        <position position="50"/>
    </location>
</feature>
<feature type="mutagenesis site" description="No effect." evidence="5">
    <original>T</original>
    <variation>A</variation>
    <location>
        <position position="63"/>
    </location>
</feature>
<proteinExistence type="evidence at protein level"/>
<sequence length="136" mass="14904">MAAAGSAAVSGAGTPVAGPTGRDLFAEGLLEFLRPAVQQLDSHVHAVRESQVELREQIDNLATELCRINEDQKVALDLDPYVKKLLNARRRVVLVNNILQNAQERLRRLNHSVAKETARRRAMLDSGVYPPGSPSK</sequence>